<evidence type="ECO:0000255" key="1">
    <source>
        <dbReference type="HAMAP-Rule" id="MF_00082"/>
    </source>
</evidence>
<evidence type="ECO:0000269" key="2">
    <source>
    </source>
</evidence>
<evidence type="ECO:0000269" key="3">
    <source>
    </source>
</evidence>
<evidence type="ECO:0007829" key="4">
    <source>
        <dbReference type="PDB" id="2BUF"/>
    </source>
</evidence>
<dbReference type="EC" id="2.7.2.8" evidence="1"/>
<dbReference type="EMBL" id="AE004091">
    <property type="protein sequence ID" value="AAG08708.1"/>
    <property type="molecule type" value="Genomic_DNA"/>
</dbReference>
<dbReference type="PIR" id="A82980">
    <property type="entry name" value="A82980"/>
</dbReference>
<dbReference type="RefSeq" id="NP_254010.1">
    <property type="nucleotide sequence ID" value="NC_002516.2"/>
</dbReference>
<dbReference type="RefSeq" id="WP_003096572.1">
    <property type="nucleotide sequence ID" value="NZ_QZGE01000020.1"/>
</dbReference>
<dbReference type="PDB" id="2BUF">
    <property type="method" value="X-ray"/>
    <property type="resolution" value="2.95 A"/>
    <property type="chains" value="A/B/C/D/E/F/G/H/I/J/K/L=2-301"/>
</dbReference>
<dbReference type="PDBsum" id="2BUF"/>
<dbReference type="SMR" id="Q9HTN2"/>
<dbReference type="FunCoup" id="Q9HTN2">
    <property type="interactions" value="381"/>
</dbReference>
<dbReference type="STRING" id="208964.PA5323"/>
<dbReference type="DrugBank" id="DB04075">
    <property type="generic name" value="N-Acetyl-L-Glutamate"/>
</dbReference>
<dbReference type="PaxDb" id="208964-PA5323"/>
<dbReference type="DNASU" id="879620"/>
<dbReference type="GeneID" id="879620"/>
<dbReference type="KEGG" id="pae:PA5323"/>
<dbReference type="PATRIC" id="fig|208964.12.peg.5578"/>
<dbReference type="PseudoCAP" id="PA5323"/>
<dbReference type="HOGENOM" id="CLU_053680_0_0_6"/>
<dbReference type="InParanoid" id="Q9HTN2"/>
<dbReference type="OrthoDB" id="9803155at2"/>
<dbReference type="PhylomeDB" id="Q9HTN2"/>
<dbReference type="BioCyc" id="PAER208964:G1FZ6-5445-MONOMER"/>
<dbReference type="BRENDA" id="2.7.2.8">
    <property type="organism ID" value="5087"/>
</dbReference>
<dbReference type="UniPathway" id="UPA00068">
    <property type="reaction ID" value="UER00107"/>
</dbReference>
<dbReference type="EvolutionaryTrace" id="Q9HTN2"/>
<dbReference type="Proteomes" id="UP000002438">
    <property type="component" value="Chromosome"/>
</dbReference>
<dbReference type="GO" id="GO:0005737">
    <property type="term" value="C:cytoplasm"/>
    <property type="evidence" value="ECO:0007669"/>
    <property type="project" value="UniProtKB-SubCell"/>
</dbReference>
<dbReference type="GO" id="GO:0003991">
    <property type="term" value="F:acetylglutamate kinase activity"/>
    <property type="evidence" value="ECO:0000318"/>
    <property type="project" value="GO_Central"/>
</dbReference>
<dbReference type="GO" id="GO:0005524">
    <property type="term" value="F:ATP binding"/>
    <property type="evidence" value="ECO:0007669"/>
    <property type="project" value="UniProtKB-UniRule"/>
</dbReference>
<dbReference type="GO" id="GO:0042450">
    <property type="term" value="P:arginine biosynthetic process via ornithine"/>
    <property type="evidence" value="ECO:0007669"/>
    <property type="project" value="UniProtKB-UniRule"/>
</dbReference>
<dbReference type="GO" id="GO:0006526">
    <property type="term" value="P:L-arginine biosynthetic process"/>
    <property type="evidence" value="ECO:0000318"/>
    <property type="project" value="GO_Central"/>
</dbReference>
<dbReference type="CDD" id="cd04250">
    <property type="entry name" value="AAK_NAGK-C"/>
    <property type="match status" value="1"/>
</dbReference>
<dbReference type="FunFam" id="3.40.1160.10:FF:000004">
    <property type="entry name" value="Acetylglutamate kinase"/>
    <property type="match status" value="1"/>
</dbReference>
<dbReference type="Gene3D" id="3.40.1160.10">
    <property type="entry name" value="Acetylglutamate kinase-like"/>
    <property type="match status" value="1"/>
</dbReference>
<dbReference type="HAMAP" id="MF_00082">
    <property type="entry name" value="ArgB"/>
    <property type="match status" value="1"/>
</dbReference>
<dbReference type="InterPro" id="IPR036393">
    <property type="entry name" value="AceGlu_kinase-like_sf"/>
</dbReference>
<dbReference type="InterPro" id="IPR004662">
    <property type="entry name" value="AcgluKinase_fam"/>
</dbReference>
<dbReference type="InterPro" id="IPR037528">
    <property type="entry name" value="ArgB"/>
</dbReference>
<dbReference type="InterPro" id="IPR001048">
    <property type="entry name" value="Asp/Glu/Uridylate_kinase"/>
</dbReference>
<dbReference type="InterPro" id="IPR001057">
    <property type="entry name" value="Glu/AcGlu_kinase"/>
</dbReference>
<dbReference type="InterPro" id="IPR041727">
    <property type="entry name" value="NAGK-C"/>
</dbReference>
<dbReference type="NCBIfam" id="TIGR00761">
    <property type="entry name" value="argB"/>
    <property type="match status" value="1"/>
</dbReference>
<dbReference type="PANTHER" id="PTHR23342">
    <property type="entry name" value="N-ACETYLGLUTAMATE SYNTHASE"/>
    <property type="match status" value="1"/>
</dbReference>
<dbReference type="PANTHER" id="PTHR23342:SF0">
    <property type="entry name" value="N-ACETYLGLUTAMATE SYNTHASE, MITOCHONDRIAL"/>
    <property type="match status" value="1"/>
</dbReference>
<dbReference type="Pfam" id="PF00696">
    <property type="entry name" value="AA_kinase"/>
    <property type="match status" value="1"/>
</dbReference>
<dbReference type="PIRSF" id="PIRSF000728">
    <property type="entry name" value="NAGK"/>
    <property type="match status" value="1"/>
</dbReference>
<dbReference type="PRINTS" id="PR00474">
    <property type="entry name" value="GLU5KINASE"/>
</dbReference>
<dbReference type="SUPFAM" id="SSF53633">
    <property type="entry name" value="Carbamate kinase-like"/>
    <property type="match status" value="1"/>
</dbReference>
<feature type="initiator methionine" description="Removed" evidence="2">
    <location>
        <position position="1"/>
    </location>
</feature>
<feature type="chain" id="PRO_0000112650" description="Acetylglutamate kinase">
    <location>
        <begin position="2"/>
        <end position="301"/>
    </location>
</feature>
<feature type="binding site" evidence="1">
    <location>
        <begin position="68"/>
        <end position="69"/>
    </location>
    <ligand>
        <name>substrate</name>
    </ligand>
</feature>
<feature type="binding site" evidence="1 3">
    <location>
        <position position="90"/>
    </location>
    <ligand>
        <name>substrate</name>
    </ligand>
</feature>
<feature type="binding site" evidence="1 3">
    <location>
        <position position="195"/>
    </location>
    <ligand>
        <name>substrate</name>
    </ligand>
</feature>
<feature type="site" description="Transition state stabilizer" evidence="1">
    <location>
        <position position="33"/>
    </location>
</feature>
<feature type="site" description="Transition state stabilizer" evidence="1">
    <location>
        <position position="255"/>
    </location>
</feature>
<feature type="helix" evidence="4">
    <location>
        <begin position="5"/>
        <end position="25"/>
    </location>
</feature>
<feature type="strand" evidence="4">
    <location>
        <begin position="29"/>
        <end position="34"/>
    </location>
</feature>
<feature type="turn" evidence="4">
    <location>
        <begin position="37"/>
        <end position="40"/>
    </location>
</feature>
<feature type="helix" evidence="4">
    <location>
        <begin position="43"/>
        <end position="57"/>
    </location>
</feature>
<feature type="strand" evidence="4">
    <location>
        <begin position="61"/>
        <end position="66"/>
    </location>
</feature>
<feature type="helix" evidence="4">
    <location>
        <begin position="70"/>
        <end position="78"/>
    </location>
</feature>
<feature type="strand" evidence="4">
    <location>
        <begin position="85"/>
        <end position="90"/>
    </location>
</feature>
<feature type="helix" evidence="4">
    <location>
        <begin position="94"/>
        <end position="106"/>
    </location>
</feature>
<feature type="helix" evidence="4">
    <location>
        <begin position="108"/>
        <end position="118"/>
    </location>
</feature>
<feature type="strand" evidence="4">
    <location>
        <begin position="123"/>
        <end position="128"/>
    </location>
</feature>
<feature type="helix" evidence="4">
    <location>
        <begin position="130"/>
        <end position="132"/>
    </location>
</feature>
<feature type="strand" evidence="4">
    <location>
        <begin position="134"/>
        <end position="138"/>
    </location>
</feature>
<feature type="strand" evidence="4">
    <location>
        <begin position="157"/>
        <end position="165"/>
    </location>
</feature>
<feature type="helix" evidence="4">
    <location>
        <begin position="167"/>
        <end position="175"/>
    </location>
</feature>
<feature type="strand" evidence="4">
    <location>
        <begin position="179"/>
        <end position="187"/>
    </location>
</feature>
<feature type="strand" evidence="4">
    <location>
        <begin position="193"/>
        <end position="195"/>
    </location>
</feature>
<feature type="helix" evidence="4">
    <location>
        <begin position="198"/>
        <end position="209"/>
    </location>
</feature>
<feature type="strand" evidence="4">
    <location>
        <begin position="212"/>
        <end position="221"/>
    </location>
</feature>
<feature type="helix" evidence="4">
    <location>
        <begin position="236"/>
        <end position="244"/>
    </location>
</feature>
<feature type="helix" evidence="4">
    <location>
        <begin position="252"/>
        <end position="264"/>
    </location>
</feature>
<feature type="strand" evidence="4">
    <location>
        <begin position="268"/>
        <end position="274"/>
    </location>
</feature>
<feature type="helix" evidence="4">
    <location>
        <begin position="280"/>
        <end position="285"/>
    </location>
</feature>
<feature type="strand" evidence="4">
    <location>
        <begin position="292"/>
        <end position="296"/>
    </location>
</feature>
<accession>Q9HTN2</accession>
<reference key="1">
    <citation type="journal article" date="2000" name="Nature">
        <title>Complete genome sequence of Pseudomonas aeruginosa PAO1, an opportunistic pathogen.</title>
        <authorList>
            <person name="Stover C.K."/>
            <person name="Pham X.-Q.T."/>
            <person name="Erwin A.L."/>
            <person name="Mizoguchi S.D."/>
            <person name="Warrener P."/>
            <person name="Hickey M.J."/>
            <person name="Brinkman F.S.L."/>
            <person name="Hufnagle W.O."/>
            <person name="Kowalik D.J."/>
            <person name="Lagrou M."/>
            <person name="Garber R.L."/>
            <person name="Goltry L."/>
            <person name="Tolentino E."/>
            <person name="Westbrock-Wadman S."/>
            <person name="Yuan Y."/>
            <person name="Brody L.L."/>
            <person name="Coulter S.N."/>
            <person name="Folger K.R."/>
            <person name="Kas A."/>
            <person name="Larbig K."/>
            <person name="Lim R.M."/>
            <person name="Smith K.A."/>
            <person name="Spencer D.H."/>
            <person name="Wong G.K.-S."/>
            <person name="Wu Z."/>
            <person name="Paulsen I.T."/>
            <person name="Reizer J."/>
            <person name="Saier M.H. Jr."/>
            <person name="Hancock R.E.W."/>
            <person name="Lory S."/>
            <person name="Olson M.V."/>
        </authorList>
    </citation>
    <scope>NUCLEOTIDE SEQUENCE [LARGE SCALE GENOMIC DNA]</scope>
    <source>
        <strain>ATCC 15692 / DSM 22644 / CIP 104116 / JCM 14847 / LMG 12228 / 1C / PRS 101 / PAO1</strain>
    </source>
</reference>
<reference key="2">
    <citation type="journal article" date="2002" name="Acta Crystallogr. D">
        <title>Towards structural understanding of feedback control of arginine biosynthesis: cloning and expression of the gene for the arginine-inhibited N-acetyl-L-glutamate kinase from Pseudomonas aeruginosa, purification and crystallization of the recombinant enzyme and preliminary X-ray studies.</title>
        <authorList>
            <person name="Fernandez-Murga M.L."/>
            <person name="Ramon-Maiques S."/>
            <person name="Gil-Ortiz F."/>
            <person name="Fita I."/>
            <person name="Rubio V."/>
        </authorList>
    </citation>
    <scope>PROTEIN SEQUENCE OF 2-18</scope>
    <scope>MASS SPECTROMETRY</scope>
    <scope>CRYSTALLIZATION</scope>
    <source>
        <strain>ATCC 15692 / DSM 22644 / CIP 104116 / JCM 14847 / LMG 12228 / 1C / PRS 101 / PAO1</strain>
    </source>
</reference>
<reference key="3">
    <citation type="journal article" date="2006" name="J. Mol. Biol.">
        <title>Structural bases of feed-back control of arginine biosynthesis, revealed by the structures of two hexameric N-acetylglutamate kinases, from Thermotoga maritima and Pseudomonas aeruginosa.</title>
        <authorList>
            <person name="Ramon-Maiques S."/>
            <person name="Fernandez-Murga M.L."/>
            <person name="Gil-Ortiz F."/>
            <person name="Vagin A."/>
            <person name="Fita I."/>
            <person name="Rubio V."/>
        </authorList>
    </citation>
    <scope>X-RAY CRYSTALLOGRAPHY (2.95 ANGSTROMS) IN COMPLEX WITH SUBSTRATE AND ATP ANALOG</scope>
    <scope>SUBUNIT</scope>
</reference>
<name>ARGB_PSEAE</name>
<comment type="function">
    <text evidence="1">Catalyzes the ATP-dependent phosphorylation of N-acetyl-L-glutamate.</text>
</comment>
<comment type="catalytic activity">
    <reaction evidence="1">
        <text>N-acetyl-L-glutamate + ATP = N-acetyl-L-glutamyl 5-phosphate + ADP</text>
        <dbReference type="Rhea" id="RHEA:14629"/>
        <dbReference type="ChEBI" id="CHEBI:30616"/>
        <dbReference type="ChEBI" id="CHEBI:44337"/>
        <dbReference type="ChEBI" id="CHEBI:57936"/>
        <dbReference type="ChEBI" id="CHEBI:456216"/>
        <dbReference type="EC" id="2.7.2.8"/>
    </reaction>
</comment>
<comment type="pathway">
    <text evidence="1">Amino-acid biosynthesis; L-arginine biosynthesis; N(2)-acetyl-L-ornithine from L-glutamate: step 2/4.</text>
</comment>
<comment type="subunit">
    <text evidence="3">Homohexamer.</text>
</comment>
<comment type="subcellular location">
    <subcellularLocation>
        <location evidence="1">Cytoplasm</location>
    </subcellularLocation>
</comment>
<comment type="mass spectrometry"/>
<comment type="similarity">
    <text evidence="1">Belongs to the acetylglutamate kinase family. ArgB subfamily.</text>
</comment>
<organism>
    <name type="scientific">Pseudomonas aeruginosa (strain ATCC 15692 / DSM 22644 / CIP 104116 / JCM 14847 / LMG 12228 / 1C / PRS 101 / PAO1)</name>
    <dbReference type="NCBI Taxonomy" id="208964"/>
    <lineage>
        <taxon>Bacteria</taxon>
        <taxon>Pseudomonadati</taxon>
        <taxon>Pseudomonadota</taxon>
        <taxon>Gammaproteobacteria</taxon>
        <taxon>Pseudomonadales</taxon>
        <taxon>Pseudomonadaceae</taxon>
        <taxon>Pseudomonas</taxon>
    </lineage>
</organism>
<sequence>MTLSRDDAAQVAKVLSEALPYIRRFVGKTLVIKYGGNAMESEELKAGFARDVVLMKAVGINPVVVHGGGPQIGDLLKRLSIESHFIDGMRVTDAATMDVVEMVLGGQVNKDIVNLINRHGGSAIGLTGKDAELIRAKKLTVTRQTPEMTKPEIIDIGHVGEVTGVNVGLLNMLVKGDFIPVIAPIGVGSNGESYNINADLVAGKVAEALKAEKLMLLTNIAGLMDKQGQVLTGLSTEQVNELIADGTIYGGMLPKIRCALEAVQGGVTSAHIIDGRVPNAVLLEIFTDSGVGTLISNRKRH</sequence>
<keyword id="KW-0002">3D-structure</keyword>
<keyword id="KW-0028">Amino-acid biosynthesis</keyword>
<keyword id="KW-0055">Arginine biosynthesis</keyword>
<keyword id="KW-0067">ATP-binding</keyword>
<keyword id="KW-0963">Cytoplasm</keyword>
<keyword id="KW-0903">Direct protein sequencing</keyword>
<keyword id="KW-0418">Kinase</keyword>
<keyword id="KW-0547">Nucleotide-binding</keyword>
<keyword id="KW-1185">Reference proteome</keyword>
<keyword id="KW-0808">Transferase</keyword>
<gene>
    <name evidence="1" type="primary">argB</name>
    <name type="ordered locus">PA5323</name>
</gene>
<proteinExistence type="evidence at protein level"/>
<protein>
    <recommendedName>
        <fullName evidence="1">Acetylglutamate kinase</fullName>
        <ecNumber evidence="1">2.7.2.8</ecNumber>
    </recommendedName>
    <alternativeName>
        <fullName evidence="1">N-acetyl-L-glutamate 5-phosphotransferase</fullName>
    </alternativeName>
    <alternativeName>
        <fullName evidence="1">NAG kinase</fullName>
        <shortName evidence="1">NAGK</shortName>
    </alternativeName>
</protein>